<gene>
    <name evidence="1" type="primary">odhA</name>
    <name type="ordered locus">BPUM_1862</name>
</gene>
<accession>A8FE66</accession>
<reference key="1">
    <citation type="journal article" date="2007" name="PLoS ONE">
        <title>Paradoxical DNA repair and peroxide resistance gene conservation in Bacillus pumilus SAFR-032.</title>
        <authorList>
            <person name="Gioia J."/>
            <person name="Yerrapragada S."/>
            <person name="Qin X."/>
            <person name="Jiang H."/>
            <person name="Igboeli O.C."/>
            <person name="Muzny D."/>
            <person name="Dugan-Rocha S."/>
            <person name="Ding Y."/>
            <person name="Hawes A."/>
            <person name="Liu W."/>
            <person name="Perez L."/>
            <person name="Kovar C."/>
            <person name="Dinh H."/>
            <person name="Lee S."/>
            <person name="Nazareth L."/>
            <person name="Blyth P."/>
            <person name="Holder M."/>
            <person name="Buhay C."/>
            <person name="Tirumalai M.R."/>
            <person name="Liu Y."/>
            <person name="Dasgupta I."/>
            <person name="Bokhetache L."/>
            <person name="Fujita M."/>
            <person name="Karouia F."/>
            <person name="Eswara Moorthy P."/>
            <person name="Siefert J."/>
            <person name="Uzman A."/>
            <person name="Buzumbo P."/>
            <person name="Verma A."/>
            <person name="Zwiya H."/>
            <person name="McWilliams B.D."/>
            <person name="Olowu A."/>
            <person name="Clinkenbeard K.D."/>
            <person name="Newcombe D."/>
            <person name="Golebiewski L."/>
            <person name="Petrosino J.F."/>
            <person name="Nicholson W.L."/>
            <person name="Fox G.E."/>
            <person name="Venkateswaran K."/>
            <person name="Highlander S.K."/>
            <person name="Weinstock G.M."/>
        </authorList>
    </citation>
    <scope>NUCLEOTIDE SEQUENCE [LARGE SCALE GENOMIC DNA]</scope>
    <source>
        <strain>SAFR-032</strain>
    </source>
</reference>
<evidence type="ECO:0000255" key="1">
    <source>
        <dbReference type="HAMAP-Rule" id="MF_01169"/>
    </source>
</evidence>
<evidence type="ECO:0000256" key="2">
    <source>
        <dbReference type="SAM" id="MobiDB-lite"/>
    </source>
</evidence>
<comment type="function">
    <text evidence="1">E1 component of the 2-oxoglutarate dehydrogenase (OGDH) complex which catalyzes the decarboxylation of 2-oxoglutarate, the first step in the conversion of 2-oxoglutarate to succinyl-CoA and CO(2).</text>
</comment>
<comment type="catalytic activity">
    <reaction evidence="1">
        <text>N(6)-[(R)-lipoyl]-L-lysyl-[protein] + 2-oxoglutarate + H(+) = N(6)-[(R)-S(8)-succinyldihydrolipoyl]-L-lysyl-[protein] + CO2</text>
        <dbReference type="Rhea" id="RHEA:12188"/>
        <dbReference type="Rhea" id="RHEA-COMP:10474"/>
        <dbReference type="Rhea" id="RHEA-COMP:20092"/>
        <dbReference type="ChEBI" id="CHEBI:15378"/>
        <dbReference type="ChEBI" id="CHEBI:16526"/>
        <dbReference type="ChEBI" id="CHEBI:16810"/>
        <dbReference type="ChEBI" id="CHEBI:83099"/>
        <dbReference type="ChEBI" id="CHEBI:83120"/>
        <dbReference type="EC" id="1.2.4.2"/>
    </reaction>
</comment>
<comment type="cofactor">
    <cofactor evidence="1">
        <name>thiamine diphosphate</name>
        <dbReference type="ChEBI" id="CHEBI:58937"/>
    </cofactor>
</comment>
<comment type="subunit">
    <text evidence="1">Homodimer. Part of the 2-oxoglutarate dehydrogenase (OGDH) complex composed of E1 (2-oxoglutarate dehydrogenase), E2 (dihydrolipoamide succinyltransferase) and E3 (dihydrolipoamide dehydrogenase); the complex contains multiple copies of the three enzymatic components (E1, E2 and E3).</text>
</comment>
<comment type="similarity">
    <text evidence="1">Belongs to the alpha-ketoglutarate dehydrogenase family.</text>
</comment>
<keyword id="KW-0324">Glycolysis</keyword>
<keyword id="KW-0560">Oxidoreductase</keyword>
<keyword id="KW-0786">Thiamine pyrophosphate</keyword>
<organism>
    <name type="scientific">Bacillus pumilus (strain SAFR-032)</name>
    <dbReference type="NCBI Taxonomy" id="315750"/>
    <lineage>
        <taxon>Bacteria</taxon>
        <taxon>Bacillati</taxon>
        <taxon>Bacillota</taxon>
        <taxon>Bacilli</taxon>
        <taxon>Bacillales</taxon>
        <taxon>Bacillaceae</taxon>
        <taxon>Bacillus</taxon>
    </lineage>
</organism>
<protein>
    <recommendedName>
        <fullName evidence="1">2-oxoglutarate dehydrogenase E1 component</fullName>
        <ecNumber evidence="1">1.2.4.2</ecNumber>
    </recommendedName>
    <alternativeName>
        <fullName evidence="1">Alpha-ketoglutarate dehydrogenase</fullName>
    </alternativeName>
</protein>
<dbReference type="EC" id="1.2.4.2" evidence="1"/>
<dbReference type="EMBL" id="CP000813">
    <property type="protein sequence ID" value="ABV62533.1"/>
    <property type="molecule type" value="Genomic_DNA"/>
</dbReference>
<dbReference type="SMR" id="A8FE66"/>
<dbReference type="STRING" id="315750.BPUM_1862"/>
<dbReference type="GeneID" id="5621126"/>
<dbReference type="KEGG" id="bpu:BPUM_1862"/>
<dbReference type="eggNOG" id="COG0567">
    <property type="taxonomic scope" value="Bacteria"/>
</dbReference>
<dbReference type="HOGENOM" id="CLU_004709_1_0_9"/>
<dbReference type="OrthoDB" id="9759785at2"/>
<dbReference type="Proteomes" id="UP000001355">
    <property type="component" value="Chromosome"/>
</dbReference>
<dbReference type="GO" id="GO:0005829">
    <property type="term" value="C:cytosol"/>
    <property type="evidence" value="ECO:0007669"/>
    <property type="project" value="TreeGrafter"/>
</dbReference>
<dbReference type="GO" id="GO:0045252">
    <property type="term" value="C:oxoglutarate dehydrogenase complex"/>
    <property type="evidence" value="ECO:0007669"/>
    <property type="project" value="TreeGrafter"/>
</dbReference>
<dbReference type="GO" id="GO:0004591">
    <property type="term" value="F:oxoglutarate dehydrogenase (succinyl-transferring) activity"/>
    <property type="evidence" value="ECO:0007669"/>
    <property type="project" value="UniProtKB-UniRule"/>
</dbReference>
<dbReference type="GO" id="GO:0030976">
    <property type="term" value="F:thiamine pyrophosphate binding"/>
    <property type="evidence" value="ECO:0007669"/>
    <property type="project" value="UniProtKB-UniRule"/>
</dbReference>
<dbReference type="GO" id="GO:0006096">
    <property type="term" value="P:glycolytic process"/>
    <property type="evidence" value="ECO:0007669"/>
    <property type="project" value="UniProtKB-UniRule"/>
</dbReference>
<dbReference type="GO" id="GO:0006099">
    <property type="term" value="P:tricarboxylic acid cycle"/>
    <property type="evidence" value="ECO:0007669"/>
    <property type="project" value="TreeGrafter"/>
</dbReference>
<dbReference type="CDD" id="cd02016">
    <property type="entry name" value="TPP_E1_OGDC_like"/>
    <property type="match status" value="1"/>
</dbReference>
<dbReference type="FunFam" id="3.40.50.11610:FF:000002">
    <property type="entry name" value="2-oxoglutarate dehydrogenase E1 component"/>
    <property type="match status" value="1"/>
</dbReference>
<dbReference type="FunFam" id="3.40.50.970:FF:000036">
    <property type="entry name" value="2-oxoglutarate dehydrogenase E1 component"/>
    <property type="match status" value="1"/>
</dbReference>
<dbReference type="Gene3D" id="3.40.50.12470">
    <property type="match status" value="1"/>
</dbReference>
<dbReference type="Gene3D" id="3.40.50.970">
    <property type="match status" value="1"/>
</dbReference>
<dbReference type="Gene3D" id="3.40.50.11610">
    <property type="entry name" value="Multifunctional 2-oxoglutarate metabolism enzyme, C-terminal domain"/>
    <property type="match status" value="1"/>
</dbReference>
<dbReference type="Gene3D" id="1.10.287.1150">
    <property type="entry name" value="TPP helical domain"/>
    <property type="match status" value="1"/>
</dbReference>
<dbReference type="HAMAP" id="MF_01169">
    <property type="entry name" value="SucA_OdhA"/>
    <property type="match status" value="1"/>
</dbReference>
<dbReference type="InterPro" id="IPR032106">
    <property type="entry name" value="2-oxogl_dehyd_N"/>
</dbReference>
<dbReference type="InterPro" id="IPR011603">
    <property type="entry name" value="2oxoglutarate_DH_E1"/>
</dbReference>
<dbReference type="InterPro" id="IPR023784">
    <property type="entry name" value="2oxoglutarate_DH_E1_bac"/>
</dbReference>
<dbReference type="InterPro" id="IPR001017">
    <property type="entry name" value="DH_E1"/>
</dbReference>
<dbReference type="InterPro" id="IPR042179">
    <property type="entry name" value="KGD_C_sf"/>
</dbReference>
<dbReference type="InterPro" id="IPR031717">
    <property type="entry name" value="ODO-1/KGD_C"/>
</dbReference>
<dbReference type="InterPro" id="IPR029061">
    <property type="entry name" value="THDP-binding"/>
</dbReference>
<dbReference type="InterPro" id="IPR005475">
    <property type="entry name" value="Transketolase-like_Pyr-bd"/>
</dbReference>
<dbReference type="NCBIfam" id="TIGR00239">
    <property type="entry name" value="2oxo_dh_E1"/>
    <property type="match status" value="1"/>
</dbReference>
<dbReference type="NCBIfam" id="NF006914">
    <property type="entry name" value="PRK09404.1"/>
    <property type="match status" value="1"/>
</dbReference>
<dbReference type="NCBIfam" id="NF008907">
    <property type="entry name" value="PRK12270.1"/>
    <property type="match status" value="1"/>
</dbReference>
<dbReference type="PANTHER" id="PTHR23152:SF4">
    <property type="entry name" value="2-OXOADIPATE DEHYDROGENASE COMPLEX COMPONENT E1"/>
    <property type="match status" value="1"/>
</dbReference>
<dbReference type="PANTHER" id="PTHR23152">
    <property type="entry name" value="2-OXOGLUTARATE DEHYDROGENASE"/>
    <property type="match status" value="1"/>
</dbReference>
<dbReference type="Pfam" id="PF16078">
    <property type="entry name" value="2-oxogl_dehyd_N"/>
    <property type="match status" value="1"/>
</dbReference>
<dbReference type="Pfam" id="PF00676">
    <property type="entry name" value="E1_dh"/>
    <property type="match status" value="1"/>
</dbReference>
<dbReference type="Pfam" id="PF16870">
    <property type="entry name" value="OxoGdeHyase_C"/>
    <property type="match status" value="1"/>
</dbReference>
<dbReference type="Pfam" id="PF02779">
    <property type="entry name" value="Transket_pyr"/>
    <property type="match status" value="1"/>
</dbReference>
<dbReference type="PIRSF" id="PIRSF000157">
    <property type="entry name" value="Oxoglu_dh_E1"/>
    <property type="match status" value="1"/>
</dbReference>
<dbReference type="SMART" id="SM00861">
    <property type="entry name" value="Transket_pyr"/>
    <property type="match status" value="1"/>
</dbReference>
<dbReference type="SUPFAM" id="SSF52518">
    <property type="entry name" value="Thiamin diphosphate-binding fold (THDP-binding)"/>
    <property type="match status" value="2"/>
</dbReference>
<sequence>MFQNDVKQPLSWEEFHGPNLGYVLELYDQYVQDPTSVDEDLRGIFDELGAPPSEMKEEIGKKENSVVTSEQIQKIASVVKLAEDIRTYGHLNASVNPLRKEKELQELFPLKEYGLTEEDVKNIPISIISPDAPKHISNGIEAINHLRNTYKRTISFEFDHVHDFEERNWLSKSIESGELFKKKPADKLVSVFKRLTEVEQFEQFLHKTFVGQKRFSIEGLDALVPVLDEIISESVTQGTSNINIGMAHRGRLNVLAHVLGKPYEIIFSEFQHAPNKELVPSEGSIGISYGWTGDVKYHLGADRQIKDEDTKSARVTLANNPSHLEFIDPIIEGSTRAAQELRTQKGYPAQDVEKALAILIHGDAAFPGEGIVAETLNLSQLVGYQVGGTIHIIANNMIGFTTESNESRSTKYASDLAKGFEIPIVHVNADDPEACLAAVQLAVEYRKRFKKDFLIDLIGYRRYGHNEMDEPSTTQPMLYDAVRKHKTVKNIFADKLVSEGLLTKEQREEIEQAVATRIEEAYQKVPSKKEHTIQEIELPEPVSNGFPAVDTSVEFDVLRKLNEELISWPDDFQVFGKLKRILEKRAKVFTDDRKVEWSLGEALAFASILKDGTPIRMTGQDSERGTFAQRNLVLHDSQTGNEFIALHELSDANASFTVHNSPLSEGSVIGFEYGYNVYSPETLVIWEAQFGDFANAAQVYFDQFISAGRAKWGQKSGLVMLLPHGYEGQGPEHSSGRTERFLQSAAENNWTVANLTSAAQYFHILRRQAKMLLREEIRPLVIMTPKSLLRNPNSLSEVQELTDGQFQPVLEQPGLVHDHEKVSRLVLSSGKVSIDISDRFTQMEEPKDWLHIARVEQLYPFPAKDIKAILSKLTNLEEIVWTQEEPQNMGAWGYIEPYLREIAPEKVKVRYIGRRRRSSTAEGDPTVHKKEQERIVSDSLTRKN</sequence>
<name>ODO1_BACP2</name>
<proteinExistence type="inferred from homology"/>
<feature type="chain" id="PRO_1000065697" description="2-oxoglutarate dehydrogenase E1 component">
    <location>
        <begin position="1"/>
        <end position="944"/>
    </location>
</feature>
<feature type="region of interest" description="Disordered" evidence="2">
    <location>
        <begin position="918"/>
        <end position="944"/>
    </location>
</feature>
<feature type="compositionally biased region" description="Basic and acidic residues" evidence="2">
    <location>
        <begin position="925"/>
        <end position="936"/>
    </location>
</feature>